<sequence length="247" mass="28362">MIKLVLLRHGESQWNRENRFTGWHDIDLTENGRNEAFQAGRLMKEAGLVFDMAYTSVLKRAIRTLWNAMDSMDLMWISVFKSWRLNERHYGALQGLNKSETSRKYGEEQVLVWRRSYDTPPPLLEKSDARYPGTDPRYGDLSEAEIPLSECLKDTVERFLPIWHETIAPQLRKGKRVIIVAHGNSLRALVKYLDNISEEDIVGLNIPTGIPLVYELDDDLKPLKNYYLGDQEALKKAVDAVAGQSKA</sequence>
<reference key="1">
    <citation type="submission" date="2006-12" db="EMBL/GenBank/DDBJ databases">
        <title>Complete sequence of Chlorobium phaeobacteroides DSM 266.</title>
        <authorList>
            <consortium name="US DOE Joint Genome Institute"/>
            <person name="Copeland A."/>
            <person name="Lucas S."/>
            <person name="Lapidus A."/>
            <person name="Barry K."/>
            <person name="Detter J.C."/>
            <person name="Glavina del Rio T."/>
            <person name="Hammon N."/>
            <person name="Israni S."/>
            <person name="Pitluck S."/>
            <person name="Goltsman E."/>
            <person name="Schmutz J."/>
            <person name="Larimer F."/>
            <person name="Land M."/>
            <person name="Hauser L."/>
            <person name="Mikhailova N."/>
            <person name="Li T."/>
            <person name="Overmann J."/>
            <person name="Bryant D.A."/>
            <person name="Richardson P."/>
        </authorList>
    </citation>
    <scope>NUCLEOTIDE SEQUENCE [LARGE SCALE GENOMIC DNA]</scope>
    <source>
        <strain>DSM 266 / SMG 266 / 2430</strain>
    </source>
</reference>
<proteinExistence type="inferred from homology"/>
<evidence type="ECO:0000255" key="1">
    <source>
        <dbReference type="HAMAP-Rule" id="MF_01039"/>
    </source>
</evidence>
<keyword id="KW-0312">Gluconeogenesis</keyword>
<keyword id="KW-0324">Glycolysis</keyword>
<keyword id="KW-0413">Isomerase</keyword>
<keyword id="KW-1185">Reference proteome</keyword>
<organism>
    <name type="scientific">Chlorobium phaeobacteroides (strain DSM 266 / SMG 266 / 2430)</name>
    <dbReference type="NCBI Taxonomy" id="290317"/>
    <lineage>
        <taxon>Bacteria</taxon>
        <taxon>Pseudomonadati</taxon>
        <taxon>Chlorobiota</taxon>
        <taxon>Chlorobiia</taxon>
        <taxon>Chlorobiales</taxon>
        <taxon>Chlorobiaceae</taxon>
        <taxon>Chlorobium/Pelodictyon group</taxon>
        <taxon>Chlorobium</taxon>
    </lineage>
</organism>
<comment type="function">
    <text evidence="1">Catalyzes the interconversion of 2-phosphoglycerate and 3-phosphoglycerate.</text>
</comment>
<comment type="catalytic activity">
    <reaction evidence="1">
        <text>(2R)-2-phosphoglycerate = (2R)-3-phosphoglycerate</text>
        <dbReference type="Rhea" id="RHEA:15901"/>
        <dbReference type="ChEBI" id="CHEBI:58272"/>
        <dbReference type="ChEBI" id="CHEBI:58289"/>
        <dbReference type="EC" id="5.4.2.11"/>
    </reaction>
</comment>
<comment type="pathway">
    <text evidence="1">Carbohydrate degradation; glycolysis; pyruvate from D-glyceraldehyde 3-phosphate: step 3/5.</text>
</comment>
<comment type="similarity">
    <text evidence="1">Belongs to the phosphoglycerate mutase family. BPG-dependent PGAM subfamily.</text>
</comment>
<feature type="chain" id="PRO_1000064047" description="2,3-bisphosphoglycerate-dependent phosphoglycerate mutase">
    <location>
        <begin position="1"/>
        <end position="247"/>
    </location>
</feature>
<feature type="active site" description="Tele-phosphohistidine intermediate" evidence="1">
    <location>
        <position position="9"/>
    </location>
</feature>
<feature type="active site" description="Proton donor/acceptor" evidence="1">
    <location>
        <position position="87"/>
    </location>
</feature>
<feature type="binding site" evidence="1">
    <location>
        <begin position="8"/>
        <end position="15"/>
    </location>
    <ligand>
        <name>substrate</name>
    </ligand>
</feature>
<feature type="binding site" evidence="1">
    <location>
        <begin position="21"/>
        <end position="22"/>
    </location>
    <ligand>
        <name>substrate</name>
    </ligand>
</feature>
<feature type="binding site" evidence="1">
    <location>
        <position position="60"/>
    </location>
    <ligand>
        <name>substrate</name>
    </ligand>
</feature>
<feature type="binding site" evidence="1">
    <location>
        <begin position="87"/>
        <end position="90"/>
    </location>
    <ligand>
        <name>substrate</name>
    </ligand>
</feature>
<feature type="binding site" evidence="1">
    <location>
        <position position="98"/>
    </location>
    <ligand>
        <name>substrate</name>
    </ligand>
</feature>
<feature type="binding site" evidence="1">
    <location>
        <begin position="114"/>
        <end position="115"/>
    </location>
    <ligand>
        <name>substrate</name>
    </ligand>
</feature>
<feature type="binding site" evidence="1">
    <location>
        <begin position="183"/>
        <end position="184"/>
    </location>
    <ligand>
        <name>substrate</name>
    </ligand>
</feature>
<feature type="site" description="Transition state stabilizer" evidence="1">
    <location>
        <position position="182"/>
    </location>
</feature>
<protein>
    <recommendedName>
        <fullName evidence="1">2,3-bisphosphoglycerate-dependent phosphoglycerate mutase</fullName>
        <shortName evidence="1">BPG-dependent PGAM</shortName>
        <shortName evidence="1">PGAM</shortName>
        <shortName evidence="1">Phosphoglyceromutase</shortName>
        <shortName evidence="1">dPGM</shortName>
        <ecNumber evidence="1">5.4.2.11</ecNumber>
    </recommendedName>
</protein>
<gene>
    <name evidence="1" type="primary">gpmA</name>
    <name type="ordered locus">Cpha266_0627</name>
</gene>
<name>GPMA_CHLPD</name>
<dbReference type="EC" id="5.4.2.11" evidence="1"/>
<dbReference type="EMBL" id="CP000492">
    <property type="protein sequence ID" value="ABL64682.1"/>
    <property type="molecule type" value="Genomic_DNA"/>
</dbReference>
<dbReference type="RefSeq" id="WP_011744515.1">
    <property type="nucleotide sequence ID" value="NC_008639.1"/>
</dbReference>
<dbReference type="SMR" id="A1BE55"/>
<dbReference type="STRING" id="290317.Cpha266_0627"/>
<dbReference type="KEGG" id="cph:Cpha266_0627"/>
<dbReference type="eggNOG" id="COG0588">
    <property type="taxonomic scope" value="Bacteria"/>
</dbReference>
<dbReference type="HOGENOM" id="CLU_033323_1_1_10"/>
<dbReference type="OrthoDB" id="9782128at2"/>
<dbReference type="UniPathway" id="UPA00109">
    <property type="reaction ID" value="UER00186"/>
</dbReference>
<dbReference type="Proteomes" id="UP000008701">
    <property type="component" value="Chromosome"/>
</dbReference>
<dbReference type="GO" id="GO:0004619">
    <property type="term" value="F:phosphoglycerate mutase activity"/>
    <property type="evidence" value="ECO:0007669"/>
    <property type="project" value="UniProtKB-EC"/>
</dbReference>
<dbReference type="GO" id="GO:0006094">
    <property type="term" value="P:gluconeogenesis"/>
    <property type="evidence" value="ECO:0007669"/>
    <property type="project" value="UniProtKB-UniRule"/>
</dbReference>
<dbReference type="GO" id="GO:0006096">
    <property type="term" value="P:glycolytic process"/>
    <property type="evidence" value="ECO:0007669"/>
    <property type="project" value="UniProtKB-UniRule"/>
</dbReference>
<dbReference type="CDD" id="cd07067">
    <property type="entry name" value="HP_PGM_like"/>
    <property type="match status" value="1"/>
</dbReference>
<dbReference type="FunFam" id="3.40.50.1240:FF:000003">
    <property type="entry name" value="2,3-bisphosphoglycerate-dependent phosphoglycerate mutase"/>
    <property type="match status" value="1"/>
</dbReference>
<dbReference type="Gene3D" id="3.40.50.1240">
    <property type="entry name" value="Phosphoglycerate mutase-like"/>
    <property type="match status" value="1"/>
</dbReference>
<dbReference type="HAMAP" id="MF_01039">
    <property type="entry name" value="PGAM_GpmA"/>
    <property type="match status" value="1"/>
</dbReference>
<dbReference type="InterPro" id="IPR013078">
    <property type="entry name" value="His_Pase_superF_clade-1"/>
</dbReference>
<dbReference type="InterPro" id="IPR029033">
    <property type="entry name" value="His_PPase_superfam"/>
</dbReference>
<dbReference type="InterPro" id="IPR001345">
    <property type="entry name" value="PG/BPGM_mutase_AS"/>
</dbReference>
<dbReference type="InterPro" id="IPR005952">
    <property type="entry name" value="Phosphogly_mut1"/>
</dbReference>
<dbReference type="NCBIfam" id="TIGR01258">
    <property type="entry name" value="pgm_1"/>
    <property type="match status" value="1"/>
</dbReference>
<dbReference type="NCBIfam" id="NF010713">
    <property type="entry name" value="PRK14115.1"/>
    <property type="match status" value="1"/>
</dbReference>
<dbReference type="PANTHER" id="PTHR11931">
    <property type="entry name" value="PHOSPHOGLYCERATE MUTASE"/>
    <property type="match status" value="1"/>
</dbReference>
<dbReference type="Pfam" id="PF00300">
    <property type="entry name" value="His_Phos_1"/>
    <property type="match status" value="1"/>
</dbReference>
<dbReference type="PIRSF" id="PIRSF000709">
    <property type="entry name" value="6PFK_2-Ptase"/>
    <property type="match status" value="1"/>
</dbReference>
<dbReference type="SMART" id="SM00855">
    <property type="entry name" value="PGAM"/>
    <property type="match status" value="1"/>
</dbReference>
<dbReference type="SUPFAM" id="SSF53254">
    <property type="entry name" value="Phosphoglycerate mutase-like"/>
    <property type="match status" value="1"/>
</dbReference>
<dbReference type="PROSITE" id="PS00175">
    <property type="entry name" value="PG_MUTASE"/>
    <property type="match status" value="1"/>
</dbReference>
<accession>A1BE55</accession>